<evidence type="ECO:0000255" key="1">
    <source>
        <dbReference type="HAMAP-Rule" id="MF_00011"/>
    </source>
</evidence>
<protein>
    <recommendedName>
        <fullName evidence="1">Adenylosuccinate synthetase</fullName>
        <shortName evidence="1">AMPSase</shortName>
        <shortName evidence="1">AdSS</shortName>
        <ecNumber evidence="1">6.3.4.4</ecNumber>
    </recommendedName>
    <alternativeName>
        <fullName evidence="1">IMP--aspartate ligase</fullName>
    </alternativeName>
</protein>
<proteinExistence type="inferred from homology"/>
<gene>
    <name evidence="1" type="primary">purA</name>
    <name type="ordered locus">M28_Spy0134</name>
</gene>
<accession>Q48VK8</accession>
<organism>
    <name type="scientific">Streptococcus pyogenes serotype M28 (strain MGAS6180)</name>
    <dbReference type="NCBI Taxonomy" id="319701"/>
    <lineage>
        <taxon>Bacteria</taxon>
        <taxon>Bacillati</taxon>
        <taxon>Bacillota</taxon>
        <taxon>Bacilli</taxon>
        <taxon>Lactobacillales</taxon>
        <taxon>Streptococcaceae</taxon>
        <taxon>Streptococcus</taxon>
    </lineage>
</organism>
<feature type="chain" id="PRO_0000224325" description="Adenylosuccinate synthetase">
    <location>
        <begin position="1"/>
        <end position="430"/>
    </location>
</feature>
<feature type="active site" description="Proton acceptor" evidence="1">
    <location>
        <position position="13"/>
    </location>
</feature>
<feature type="active site" description="Proton donor" evidence="1">
    <location>
        <position position="41"/>
    </location>
</feature>
<feature type="binding site" evidence="1">
    <location>
        <begin position="12"/>
        <end position="18"/>
    </location>
    <ligand>
        <name>GTP</name>
        <dbReference type="ChEBI" id="CHEBI:37565"/>
    </ligand>
</feature>
<feature type="binding site" description="in other chain" evidence="1">
    <location>
        <begin position="13"/>
        <end position="16"/>
    </location>
    <ligand>
        <name>IMP</name>
        <dbReference type="ChEBI" id="CHEBI:58053"/>
        <note>ligand shared between dimeric partners</note>
    </ligand>
</feature>
<feature type="binding site" evidence="1">
    <location>
        <position position="13"/>
    </location>
    <ligand>
        <name>Mg(2+)</name>
        <dbReference type="ChEBI" id="CHEBI:18420"/>
    </ligand>
</feature>
<feature type="binding site" description="in other chain" evidence="1">
    <location>
        <begin position="38"/>
        <end position="41"/>
    </location>
    <ligand>
        <name>IMP</name>
        <dbReference type="ChEBI" id="CHEBI:58053"/>
        <note>ligand shared between dimeric partners</note>
    </ligand>
</feature>
<feature type="binding site" evidence="1">
    <location>
        <begin position="40"/>
        <end position="42"/>
    </location>
    <ligand>
        <name>GTP</name>
        <dbReference type="ChEBI" id="CHEBI:37565"/>
    </ligand>
</feature>
<feature type="binding site" evidence="1">
    <location>
        <position position="40"/>
    </location>
    <ligand>
        <name>Mg(2+)</name>
        <dbReference type="ChEBI" id="CHEBI:18420"/>
    </ligand>
</feature>
<feature type="binding site" description="in other chain" evidence="1">
    <location>
        <position position="128"/>
    </location>
    <ligand>
        <name>IMP</name>
        <dbReference type="ChEBI" id="CHEBI:58053"/>
        <note>ligand shared between dimeric partners</note>
    </ligand>
</feature>
<feature type="binding site" evidence="1">
    <location>
        <position position="142"/>
    </location>
    <ligand>
        <name>IMP</name>
        <dbReference type="ChEBI" id="CHEBI:58053"/>
        <note>ligand shared between dimeric partners</note>
    </ligand>
</feature>
<feature type="binding site" description="in other chain" evidence="1">
    <location>
        <position position="223"/>
    </location>
    <ligand>
        <name>IMP</name>
        <dbReference type="ChEBI" id="CHEBI:58053"/>
        <note>ligand shared between dimeric partners</note>
    </ligand>
</feature>
<feature type="binding site" description="in other chain" evidence="1">
    <location>
        <position position="238"/>
    </location>
    <ligand>
        <name>IMP</name>
        <dbReference type="ChEBI" id="CHEBI:58053"/>
        <note>ligand shared between dimeric partners</note>
    </ligand>
</feature>
<feature type="binding site" evidence="1">
    <location>
        <begin position="298"/>
        <end position="304"/>
    </location>
    <ligand>
        <name>substrate</name>
    </ligand>
</feature>
<feature type="binding site" description="in other chain" evidence="1">
    <location>
        <position position="302"/>
    </location>
    <ligand>
        <name>IMP</name>
        <dbReference type="ChEBI" id="CHEBI:58053"/>
        <note>ligand shared between dimeric partners</note>
    </ligand>
</feature>
<feature type="binding site" evidence="1">
    <location>
        <position position="304"/>
    </location>
    <ligand>
        <name>GTP</name>
        <dbReference type="ChEBI" id="CHEBI:37565"/>
    </ligand>
</feature>
<feature type="binding site" evidence="1">
    <location>
        <begin position="330"/>
        <end position="332"/>
    </location>
    <ligand>
        <name>GTP</name>
        <dbReference type="ChEBI" id="CHEBI:37565"/>
    </ligand>
</feature>
<feature type="binding site" evidence="1">
    <location>
        <begin position="412"/>
        <end position="414"/>
    </location>
    <ligand>
        <name>GTP</name>
        <dbReference type="ChEBI" id="CHEBI:37565"/>
    </ligand>
</feature>
<dbReference type="EC" id="6.3.4.4" evidence="1"/>
<dbReference type="EMBL" id="CP000056">
    <property type="protein sequence ID" value="AAX71248.1"/>
    <property type="molecule type" value="Genomic_DNA"/>
</dbReference>
<dbReference type="RefSeq" id="WP_011284453.1">
    <property type="nucleotide sequence ID" value="NC_007296.2"/>
</dbReference>
<dbReference type="SMR" id="Q48VK8"/>
<dbReference type="KEGG" id="spb:M28_Spy0134"/>
<dbReference type="HOGENOM" id="CLU_029848_0_0_9"/>
<dbReference type="UniPathway" id="UPA00075">
    <property type="reaction ID" value="UER00335"/>
</dbReference>
<dbReference type="GO" id="GO:0005737">
    <property type="term" value="C:cytoplasm"/>
    <property type="evidence" value="ECO:0007669"/>
    <property type="project" value="UniProtKB-SubCell"/>
</dbReference>
<dbReference type="GO" id="GO:0004019">
    <property type="term" value="F:adenylosuccinate synthase activity"/>
    <property type="evidence" value="ECO:0007669"/>
    <property type="project" value="UniProtKB-UniRule"/>
</dbReference>
<dbReference type="GO" id="GO:0005525">
    <property type="term" value="F:GTP binding"/>
    <property type="evidence" value="ECO:0007669"/>
    <property type="project" value="UniProtKB-UniRule"/>
</dbReference>
<dbReference type="GO" id="GO:0000287">
    <property type="term" value="F:magnesium ion binding"/>
    <property type="evidence" value="ECO:0007669"/>
    <property type="project" value="UniProtKB-UniRule"/>
</dbReference>
<dbReference type="GO" id="GO:0044208">
    <property type="term" value="P:'de novo' AMP biosynthetic process"/>
    <property type="evidence" value="ECO:0007669"/>
    <property type="project" value="UniProtKB-UniRule"/>
</dbReference>
<dbReference type="GO" id="GO:0046040">
    <property type="term" value="P:IMP metabolic process"/>
    <property type="evidence" value="ECO:0007669"/>
    <property type="project" value="TreeGrafter"/>
</dbReference>
<dbReference type="CDD" id="cd03108">
    <property type="entry name" value="AdSS"/>
    <property type="match status" value="1"/>
</dbReference>
<dbReference type="FunFam" id="1.10.300.10:FF:000001">
    <property type="entry name" value="Adenylosuccinate synthetase"/>
    <property type="match status" value="1"/>
</dbReference>
<dbReference type="FunFam" id="3.90.170.10:FF:000001">
    <property type="entry name" value="Adenylosuccinate synthetase"/>
    <property type="match status" value="1"/>
</dbReference>
<dbReference type="Gene3D" id="3.40.440.10">
    <property type="entry name" value="Adenylosuccinate Synthetase, subunit A, domain 1"/>
    <property type="match status" value="1"/>
</dbReference>
<dbReference type="Gene3D" id="1.10.300.10">
    <property type="entry name" value="Adenylosuccinate Synthetase, subunit A, domain 2"/>
    <property type="match status" value="1"/>
</dbReference>
<dbReference type="Gene3D" id="3.90.170.10">
    <property type="entry name" value="Adenylosuccinate Synthetase, subunit A, domain 3"/>
    <property type="match status" value="1"/>
</dbReference>
<dbReference type="HAMAP" id="MF_00011">
    <property type="entry name" value="Adenylosucc_synth"/>
    <property type="match status" value="1"/>
</dbReference>
<dbReference type="InterPro" id="IPR018220">
    <property type="entry name" value="Adenylosuccin_syn_GTP-bd"/>
</dbReference>
<dbReference type="InterPro" id="IPR033128">
    <property type="entry name" value="Adenylosuccin_syn_Lys_AS"/>
</dbReference>
<dbReference type="InterPro" id="IPR042109">
    <property type="entry name" value="Adenylosuccinate_synth_dom1"/>
</dbReference>
<dbReference type="InterPro" id="IPR042110">
    <property type="entry name" value="Adenylosuccinate_synth_dom2"/>
</dbReference>
<dbReference type="InterPro" id="IPR042111">
    <property type="entry name" value="Adenylosuccinate_synth_dom3"/>
</dbReference>
<dbReference type="InterPro" id="IPR001114">
    <property type="entry name" value="Adenylosuccinate_synthetase"/>
</dbReference>
<dbReference type="InterPro" id="IPR027417">
    <property type="entry name" value="P-loop_NTPase"/>
</dbReference>
<dbReference type="NCBIfam" id="NF002223">
    <property type="entry name" value="PRK01117.1"/>
    <property type="match status" value="1"/>
</dbReference>
<dbReference type="NCBIfam" id="TIGR00184">
    <property type="entry name" value="purA"/>
    <property type="match status" value="1"/>
</dbReference>
<dbReference type="PANTHER" id="PTHR11846">
    <property type="entry name" value="ADENYLOSUCCINATE SYNTHETASE"/>
    <property type="match status" value="1"/>
</dbReference>
<dbReference type="PANTHER" id="PTHR11846:SF0">
    <property type="entry name" value="ADENYLOSUCCINATE SYNTHETASE"/>
    <property type="match status" value="1"/>
</dbReference>
<dbReference type="Pfam" id="PF00709">
    <property type="entry name" value="Adenylsucc_synt"/>
    <property type="match status" value="1"/>
</dbReference>
<dbReference type="SMART" id="SM00788">
    <property type="entry name" value="Adenylsucc_synt"/>
    <property type="match status" value="1"/>
</dbReference>
<dbReference type="SUPFAM" id="SSF52540">
    <property type="entry name" value="P-loop containing nucleoside triphosphate hydrolases"/>
    <property type="match status" value="1"/>
</dbReference>
<dbReference type="PROSITE" id="PS01266">
    <property type="entry name" value="ADENYLOSUCCIN_SYN_1"/>
    <property type="match status" value="1"/>
</dbReference>
<dbReference type="PROSITE" id="PS00513">
    <property type="entry name" value="ADENYLOSUCCIN_SYN_2"/>
    <property type="match status" value="1"/>
</dbReference>
<keyword id="KW-0963">Cytoplasm</keyword>
<keyword id="KW-0342">GTP-binding</keyword>
<keyword id="KW-0436">Ligase</keyword>
<keyword id="KW-0460">Magnesium</keyword>
<keyword id="KW-0479">Metal-binding</keyword>
<keyword id="KW-0547">Nucleotide-binding</keyword>
<keyword id="KW-0658">Purine biosynthesis</keyword>
<name>PURA_STRPM</name>
<sequence>MTSVVVVGTQWGDEGKGKITDFLSADAEVIARYQGGDNAGHTIVIDGKKFKLHLIPSGIFFPQKISVIGNGVVVNPKSLVKELAYLHDEGVTTDNLRISDRAHVILPYHIQLDQLQEDAKGDNKIGTTIKGIGPAYMDKAARVGIRIADLLDKDIFAERLRINLAEKNRLFEKMYDSTPLDFDAIFEEYYAYGQEIKQYVTDTSVILNDALDAGKRVLFEGAQGVMLDIDQGTYPFVTSSNPVAGGVTIGSGVGPSKINKVVGVCKAYTSRVGDGPFPTELFDEVGERIREVGHEYGTTTGRPRRVGWFDSVVMRHSRRVSGITNLSLNSIDVLSGLDTVKICVAYDLDGKRIDYYPASLEQLKRCKPIYEELPGWQEDITGVRSLDELPENARNYVRRVGELVGVRISTFSVGPGREQTNILESVWASI</sequence>
<reference key="1">
    <citation type="journal article" date="2005" name="J. Infect. Dis.">
        <title>Genome sequence of a serotype M28 strain of group A Streptococcus: potential new insights into puerperal sepsis and bacterial disease specificity.</title>
        <authorList>
            <person name="Green N.M."/>
            <person name="Zhang S."/>
            <person name="Porcella S.F."/>
            <person name="Nagiec M.J."/>
            <person name="Barbian K.D."/>
            <person name="Beres S.B."/>
            <person name="Lefebvre R.B."/>
            <person name="Musser J.M."/>
        </authorList>
    </citation>
    <scope>NUCLEOTIDE SEQUENCE [LARGE SCALE GENOMIC DNA]</scope>
    <source>
        <strain>MGAS6180</strain>
    </source>
</reference>
<comment type="function">
    <text evidence="1">Plays an important role in the de novo pathway of purine nucleotide biosynthesis. Catalyzes the first committed step in the biosynthesis of AMP from IMP.</text>
</comment>
<comment type="catalytic activity">
    <reaction evidence="1">
        <text>IMP + L-aspartate + GTP = N(6)-(1,2-dicarboxyethyl)-AMP + GDP + phosphate + 2 H(+)</text>
        <dbReference type="Rhea" id="RHEA:15753"/>
        <dbReference type="ChEBI" id="CHEBI:15378"/>
        <dbReference type="ChEBI" id="CHEBI:29991"/>
        <dbReference type="ChEBI" id="CHEBI:37565"/>
        <dbReference type="ChEBI" id="CHEBI:43474"/>
        <dbReference type="ChEBI" id="CHEBI:57567"/>
        <dbReference type="ChEBI" id="CHEBI:58053"/>
        <dbReference type="ChEBI" id="CHEBI:58189"/>
        <dbReference type="EC" id="6.3.4.4"/>
    </reaction>
</comment>
<comment type="cofactor">
    <cofactor evidence="1">
        <name>Mg(2+)</name>
        <dbReference type="ChEBI" id="CHEBI:18420"/>
    </cofactor>
    <text evidence="1">Binds 1 Mg(2+) ion per subunit.</text>
</comment>
<comment type="pathway">
    <text evidence="1">Purine metabolism; AMP biosynthesis via de novo pathway; AMP from IMP: step 1/2.</text>
</comment>
<comment type="subunit">
    <text evidence="1">Homodimer.</text>
</comment>
<comment type="subcellular location">
    <subcellularLocation>
        <location evidence="1">Cytoplasm</location>
    </subcellularLocation>
</comment>
<comment type="similarity">
    <text evidence="1">Belongs to the adenylosuccinate synthetase family.</text>
</comment>